<comment type="subcellular location">
    <subcellularLocation>
        <location evidence="2">Membrane</location>
        <topology evidence="2">Multi-pass membrane protein</topology>
    </subcellularLocation>
</comment>
<comment type="similarity">
    <text evidence="2">Belongs to the PRA1 family.</text>
</comment>
<comment type="sequence caution" evidence="2">
    <conflict type="erroneous initiation">
        <sequence resource="EMBL-CDS" id="BAA13820"/>
    </conflict>
</comment>
<name>PRA1_SCHPO</name>
<evidence type="ECO:0000255" key="1"/>
<evidence type="ECO:0000305" key="2"/>
<sequence>MSALSLSITKVSETFSEIYASRAQYLSGFKSVGEFLDVRRISRPRNFSEAQSRISFNFSRFSSNYLAIIAMLVIYALIRNPLLLIVIGIGVGGVYGIRKLQGADLQLSHRVISNQNLYVILACVLIPLGLFASPIETIIWLVGASCVCVFGHAAFFEPPVESAFETVEQQV</sequence>
<organism>
    <name type="scientific">Schizosaccharomyces pombe (strain 972 / ATCC 24843)</name>
    <name type="common">Fission yeast</name>
    <dbReference type="NCBI Taxonomy" id="284812"/>
    <lineage>
        <taxon>Eukaryota</taxon>
        <taxon>Fungi</taxon>
        <taxon>Dikarya</taxon>
        <taxon>Ascomycota</taxon>
        <taxon>Taphrinomycotina</taxon>
        <taxon>Schizosaccharomycetes</taxon>
        <taxon>Schizosaccharomycetales</taxon>
        <taxon>Schizosaccharomycetaceae</taxon>
        <taxon>Schizosaccharomyces</taxon>
    </lineage>
</organism>
<gene>
    <name type="ORF">SPCC306.02c</name>
</gene>
<keyword id="KW-0472">Membrane</keyword>
<keyword id="KW-1185">Reference proteome</keyword>
<keyword id="KW-0812">Transmembrane</keyword>
<keyword id="KW-1133">Transmembrane helix</keyword>
<reference key="1">
    <citation type="journal article" date="1997" name="DNA Res.">
        <title>Identification of open reading frames in Schizosaccharomyces pombe cDNAs.</title>
        <authorList>
            <person name="Yoshioka S."/>
            <person name="Kato K."/>
            <person name="Nakai K."/>
            <person name="Okayama H."/>
            <person name="Nojima H."/>
        </authorList>
    </citation>
    <scope>NUCLEOTIDE SEQUENCE [LARGE SCALE MRNA]</scope>
    <source>
        <strain>PR745</strain>
    </source>
</reference>
<reference key="2">
    <citation type="journal article" date="2002" name="Nature">
        <title>The genome sequence of Schizosaccharomyces pombe.</title>
        <authorList>
            <person name="Wood V."/>
            <person name="Gwilliam R."/>
            <person name="Rajandream M.A."/>
            <person name="Lyne M.H."/>
            <person name="Lyne R."/>
            <person name="Stewart A."/>
            <person name="Sgouros J.G."/>
            <person name="Peat N."/>
            <person name="Hayles J."/>
            <person name="Baker S.G."/>
            <person name="Basham D."/>
            <person name="Bowman S."/>
            <person name="Brooks K."/>
            <person name="Brown D."/>
            <person name="Brown S."/>
            <person name="Chillingworth T."/>
            <person name="Churcher C.M."/>
            <person name="Collins M."/>
            <person name="Connor R."/>
            <person name="Cronin A."/>
            <person name="Davis P."/>
            <person name="Feltwell T."/>
            <person name="Fraser A."/>
            <person name="Gentles S."/>
            <person name="Goble A."/>
            <person name="Hamlin N."/>
            <person name="Harris D.E."/>
            <person name="Hidalgo J."/>
            <person name="Hodgson G."/>
            <person name="Holroyd S."/>
            <person name="Hornsby T."/>
            <person name="Howarth S."/>
            <person name="Huckle E.J."/>
            <person name="Hunt S."/>
            <person name="Jagels K."/>
            <person name="James K.D."/>
            <person name="Jones L."/>
            <person name="Jones M."/>
            <person name="Leather S."/>
            <person name="McDonald S."/>
            <person name="McLean J."/>
            <person name="Mooney P."/>
            <person name="Moule S."/>
            <person name="Mungall K.L."/>
            <person name="Murphy L.D."/>
            <person name="Niblett D."/>
            <person name="Odell C."/>
            <person name="Oliver K."/>
            <person name="O'Neil S."/>
            <person name="Pearson D."/>
            <person name="Quail M.A."/>
            <person name="Rabbinowitsch E."/>
            <person name="Rutherford K.M."/>
            <person name="Rutter S."/>
            <person name="Saunders D."/>
            <person name="Seeger K."/>
            <person name="Sharp S."/>
            <person name="Skelton J."/>
            <person name="Simmonds M.N."/>
            <person name="Squares R."/>
            <person name="Squares S."/>
            <person name="Stevens K."/>
            <person name="Taylor K."/>
            <person name="Taylor R.G."/>
            <person name="Tivey A."/>
            <person name="Walsh S.V."/>
            <person name="Warren T."/>
            <person name="Whitehead S."/>
            <person name="Woodward J.R."/>
            <person name="Volckaert G."/>
            <person name="Aert R."/>
            <person name="Robben J."/>
            <person name="Grymonprez B."/>
            <person name="Weltjens I."/>
            <person name="Vanstreels E."/>
            <person name="Rieger M."/>
            <person name="Schaefer M."/>
            <person name="Mueller-Auer S."/>
            <person name="Gabel C."/>
            <person name="Fuchs M."/>
            <person name="Duesterhoeft A."/>
            <person name="Fritzc C."/>
            <person name="Holzer E."/>
            <person name="Moestl D."/>
            <person name="Hilbert H."/>
            <person name="Borzym K."/>
            <person name="Langer I."/>
            <person name="Beck A."/>
            <person name="Lehrach H."/>
            <person name="Reinhardt R."/>
            <person name="Pohl T.M."/>
            <person name="Eger P."/>
            <person name="Zimmermann W."/>
            <person name="Wedler H."/>
            <person name="Wambutt R."/>
            <person name="Purnelle B."/>
            <person name="Goffeau A."/>
            <person name="Cadieu E."/>
            <person name="Dreano S."/>
            <person name="Gloux S."/>
            <person name="Lelaure V."/>
            <person name="Mottier S."/>
            <person name="Galibert F."/>
            <person name="Aves S.J."/>
            <person name="Xiang Z."/>
            <person name="Hunt C."/>
            <person name="Moore K."/>
            <person name="Hurst S.M."/>
            <person name="Lucas M."/>
            <person name="Rochet M."/>
            <person name="Gaillardin C."/>
            <person name="Tallada V.A."/>
            <person name="Garzon A."/>
            <person name="Thode G."/>
            <person name="Daga R.R."/>
            <person name="Cruzado L."/>
            <person name="Jimenez J."/>
            <person name="Sanchez M."/>
            <person name="del Rey F."/>
            <person name="Benito J."/>
            <person name="Dominguez A."/>
            <person name="Revuelta J.L."/>
            <person name="Moreno S."/>
            <person name="Armstrong J."/>
            <person name="Forsburg S.L."/>
            <person name="Cerutti L."/>
            <person name="Lowe T."/>
            <person name="McCombie W.R."/>
            <person name="Paulsen I."/>
            <person name="Potashkin J."/>
            <person name="Shpakovski G.V."/>
            <person name="Ussery D."/>
            <person name="Barrell B.G."/>
            <person name="Nurse P."/>
        </authorList>
    </citation>
    <scope>NUCLEOTIDE SEQUENCE [LARGE SCALE GENOMIC DNA]</scope>
    <source>
        <strain>972 / ATCC 24843</strain>
    </source>
</reference>
<proteinExistence type="evidence at transcript level"/>
<dbReference type="EMBL" id="D89158">
    <property type="protein sequence ID" value="BAA13820.1"/>
    <property type="status" value="ALT_INIT"/>
    <property type="molecule type" value="mRNA"/>
</dbReference>
<dbReference type="EMBL" id="CU329672">
    <property type="protein sequence ID" value="CAB41650.1"/>
    <property type="molecule type" value="Genomic_DNA"/>
</dbReference>
<dbReference type="PIR" id="T41280">
    <property type="entry name" value="T41280"/>
</dbReference>
<dbReference type="PIR" id="T42519">
    <property type="entry name" value="T42519"/>
</dbReference>
<dbReference type="BioGRID" id="275741">
    <property type="interactions" value="22"/>
</dbReference>
<dbReference type="FunCoup" id="Q9UUN5">
    <property type="interactions" value="369"/>
</dbReference>
<dbReference type="STRING" id="284812.Q9UUN5"/>
<dbReference type="iPTMnet" id="Q9UUN5"/>
<dbReference type="PaxDb" id="4896-SPCC306.02c.1"/>
<dbReference type="EnsemblFungi" id="SPCC306.02c.1">
    <property type="protein sequence ID" value="SPCC306.02c.1:pep"/>
    <property type="gene ID" value="SPCC306.02c"/>
</dbReference>
<dbReference type="KEGG" id="spo:2539170"/>
<dbReference type="PomBase" id="SPCC306.02c"/>
<dbReference type="VEuPathDB" id="FungiDB:SPCC306.02c"/>
<dbReference type="eggNOG" id="KOG3142">
    <property type="taxonomic scope" value="Eukaryota"/>
</dbReference>
<dbReference type="HOGENOM" id="CLU_103851_1_1_1"/>
<dbReference type="InParanoid" id="Q9UUN5"/>
<dbReference type="OMA" id="PWTVFFN"/>
<dbReference type="PhylomeDB" id="Q9UUN5"/>
<dbReference type="PRO" id="PR:Q9UUN5"/>
<dbReference type="Proteomes" id="UP000002485">
    <property type="component" value="Chromosome III"/>
</dbReference>
<dbReference type="GO" id="GO:0030134">
    <property type="term" value="C:COPII-coated ER to Golgi transport vesicle"/>
    <property type="evidence" value="ECO:0000266"/>
    <property type="project" value="PomBase"/>
</dbReference>
<dbReference type="GO" id="GO:0005794">
    <property type="term" value="C:Golgi apparatus"/>
    <property type="evidence" value="ECO:0000318"/>
    <property type="project" value="GO_Central"/>
</dbReference>
<dbReference type="GO" id="GO:0016020">
    <property type="term" value="C:membrane"/>
    <property type="evidence" value="ECO:0007669"/>
    <property type="project" value="UniProtKB-SubCell"/>
</dbReference>
<dbReference type="GO" id="GO:0031267">
    <property type="term" value="F:small GTPase binding"/>
    <property type="evidence" value="ECO:0000255"/>
    <property type="project" value="PomBase"/>
</dbReference>
<dbReference type="GO" id="GO:0006888">
    <property type="term" value="P:endoplasmic reticulum to Golgi vesicle-mediated transport"/>
    <property type="evidence" value="ECO:0000266"/>
    <property type="project" value="PomBase"/>
</dbReference>
<dbReference type="InterPro" id="IPR004895">
    <property type="entry name" value="Prenylated_rab_accept_PRA1"/>
</dbReference>
<dbReference type="PANTHER" id="PTHR19317">
    <property type="entry name" value="PRENYLATED RAB ACCEPTOR 1-RELATED"/>
    <property type="match status" value="1"/>
</dbReference>
<dbReference type="PANTHER" id="PTHR19317:SF0">
    <property type="entry name" value="PRENYLATED RAB ACCEPTOR PROTEIN 1"/>
    <property type="match status" value="1"/>
</dbReference>
<dbReference type="Pfam" id="PF03208">
    <property type="entry name" value="PRA1"/>
    <property type="match status" value="1"/>
</dbReference>
<feature type="chain" id="PRO_0000220886" description="PRA1-like protein">
    <location>
        <begin position="1"/>
        <end position="171"/>
    </location>
</feature>
<feature type="transmembrane region" description="Helical" evidence="1">
    <location>
        <begin position="67"/>
        <end position="87"/>
    </location>
</feature>
<feature type="transmembrane region" description="Helical" evidence="1">
    <location>
        <begin position="119"/>
        <end position="139"/>
    </location>
</feature>
<feature type="transmembrane region" description="Helical" evidence="1">
    <location>
        <begin position="140"/>
        <end position="160"/>
    </location>
</feature>
<accession>Q9UUN5</accession>
<accession>P78809</accession>
<protein>
    <recommendedName>
        <fullName>PRA1-like protein</fullName>
    </recommendedName>
</protein>